<organism>
    <name type="scientific">Synechococcus sp. (strain ATCC 27144 / PCC 6301 / SAUG 1402/1)</name>
    <name type="common">Anacystis nidulans</name>
    <dbReference type="NCBI Taxonomy" id="269084"/>
    <lineage>
        <taxon>Bacteria</taxon>
        <taxon>Bacillati</taxon>
        <taxon>Cyanobacteriota</taxon>
        <taxon>Cyanophyceae</taxon>
        <taxon>Synechococcales</taxon>
        <taxon>Synechococcaceae</taxon>
        <taxon>Synechococcus</taxon>
    </lineage>
</organism>
<sequence length="402" mass="44375">MTDSWTWLQRGTHEIFPDQPESADPDVSLLARLQQGDRPLRIKLGIDPTGSDIHLGHSIIFRKLRQFQDAGHTAVLIIGDFTARIGDPTGKSEVRRQLTAEDVQRNAETYLDQLRPILDFETPGRLEIRYNSEWLAGLDLAKILELLGTMTVGQMLAKEGFSERYDKGTPVYLHEFLYPLMQGYDSVAVQSDVELGGTDQKFNIAVGRDLQRHFGLQPQFGLLLPILIGLDGSQKMSKSLGNYVGLNEDALSMYSKLEKVPDALVADYFELLTSQDLAALPENPRDRQKLLALDVVSQYHGAEAAAAAQKAAQELVQGSAVQAEAVPEFPLSQVNFPAKAFYLVSAVGLGLTSSEARRQIQGGAVRLDGQKLDDPNHIFEAPTALKGRVIQVGKKKFVRLVL</sequence>
<reference key="1">
    <citation type="journal article" date="2007" name="Photosyn. Res.">
        <title>Complete nucleotide sequence of the freshwater unicellular cyanobacterium Synechococcus elongatus PCC 6301 chromosome: gene content and organization.</title>
        <authorList>
            <person name="Sugita C."/>
            <person name="Ogata K."/>
            <person name="Shikata M."/>
            <person name="Jikuya H."/>
            <person name="Takano J."/>
            <person name="Furumichi M."/>
            <person name="Kanehisa M."/>
            <person name="Omata T."/>
            <person name="Sugiura M."/>
            <person name="Sugita M."/>
        </authorList>
    </citation>
    <scope>NUCLEOTIDE SEQUENCE [LARGE SCALE GENOMIC DNA]</scope>
    <source>
        <strain>ATCC 27144 / PCC 6301 / SAUG 1402/1</strain>
    </source>
</reference>
<name>SYY_SYNP6</name>
<dbReference type="EC" id="6.1.1.1" evidence="1"/>
<dbReference type="EMBL" id="AP008231">
    <property type="protein sequence ID" value="BAD79730.1"/>
    <property type="molecule type" value="Genomic_DNA"/>
</dbReference>
<dbReference type="RefSeq" id="WP_011243850.1">
    <property type="nucleotide sequence ID" value="NZ_CP085785.1"/>
</dbReference>
<dbReference type="SMR" id="Q5N1U0"/>
<dbReference type="GeneID" id="72431464"/>
<dbReference type="KEGG" id="syc:syc1540_d"/>
<dbReference type="eggNOG" id="COG0162">
    <property type="taxonomic scope" value="Bacteria"/>
</dbReference>
<dbReference type="Proteomes" id="UP000001175">
    <property type="component" value="Chromosome"/>
</dbReference>
<dbReference type="GO" id="GO:0005829">
    <property type="term" value="C:cytosol"/>
    <property type="evidence" value="ECO:0007669"/>
    <property type="project" value="TreeGrafter"/>
</dbReference>
<dbReference type="GO" id="GO:0005524">
    <property type="term" value="F:ATP binding"/>
    <property type="evidence" value="ECO:0007669"/>
    <property type="project" value="UniProtKB-UniRule"/>
</dbReference>
<dbReference type="GO" id="GO:0003723">
    <property type="term" value="F:RNA binding"/>
    <property type="evidence" value="ECO:0007669"/>
    <property type="project" value="UniProtKB-KW"/>
</dbReference>
<dbReference type="GO" id="GO:0004831">
    <property type="term" value="F:tyrosine-tRNA ligase activity"/>
    <property type="evidence" value="ECO:0007669"/>
    <property type="project" value="UniProtKB-UniRule"/>
</dbReference>
<dbReference type="GO" id="GO:0006437">
    <property type="term" value="P:tyrosyl-tRNA aminoacylation"/>
    <property type="evidence" value="ECO:0007669"/>
    <property type="project" value="UniProtKB-UniRule"/>
</dbReference>
<dbReference type="CDD" id="cd00165">
    <property type="entry name" value="S4"/>
    <property type="match status" value="1"/>
</dbReference>
<dbReference type="CDD" id="cd00805">
    <property type="entry name" value="TyrRS_core"/>
    <property type="match status" value="1"/>
</dbReference>
<dbReference type="Gene3D" id="3.40.50.620">
    <property type="entry name" value="HUPs"/>
    <property type="match status" value="1"/>
</dbReference>
<dbReference type="Gene3D" id="3.10.290.10">
    <property type="entry name" value="RNA-binding S4 domain"/>
    <property type="match status" value="1"/>
</dbReference>
<dbReference type="Gene3D" id="1.10.240.10">
    <property type="entry name" value="Tyrosyl-Transfer RNA Synthetase"/>
    <property type="match status" value="1"/>
</dbReference>
<dbReference type="HAMAP" id="MF_02007">
    <property type="entry name" value="Tyr_tRNA_synth_type2"/>
    <property type="match status" value="1"/>
</dbReference>
<dbReference type="InterPro" id="IPR002305">
    <property type="entry name" value="aa-tRNA-synth_Ic"/>
</dbReference>
<dbReference type="InterPro" id="IPR014729">
    <property type="entry name" value="Rossmann-like_a/b/a_fold"/>
</dbReference>
<dbReference type="InterPro" id="IPR002942">
    <property type="entry name" value="S4_RNA-bd"/>
</dbReference>
<dbReference type="InterPro" id="IPR036986">
    <property type="entry name" value="S4_RNA-bd_sf"/>
</dbReference>
<dbReference type="InterPro" id="IPR002307">
    <property type="entry name" value="Tyr-tRNA-ligase"/>
</dbReference>
<dbReference type="InterPro" id="IPR024088">
    <property type="entry name" value="Tyr-tRNA-ligase_bac-type"/>
</dbReference>
<dbReference type="InterPro" id="IPR024108">
    <property type="entry name" value="Tyr-tRNA-ligase_bac_2"/>
</dbReference>
<dbReference type="NCBIfam" id="TIGR00234">
    <property type="entry name" value="tyrS"/>
    <property type="match status" value="1"/>
</dbReference>
<dbReference type="PANTHER" id="PTHR11766:SF1">
    <property type="entry name" value="TYROSINE--TRNA LIGASE"/>
    <property type="match status" value="1"/>
</dbReference>
<dbReference type="PANTHER" id="PTHR11766">
    <property type="entry name" value="TYROSYL-TRNA SYNTHETASE"/>
    <property type="match status" value="1"/>
</dbReference>
<dbReference type="Pfam" id="PF01479">
    <property type="entry name" value="S4"/>
    <property type="match status" value="1"/>
</dbReference>
<dbReference type="Pfam" id="PF00579">
    <property type="entry name" value="tRNA-synt_1b"/>
    <property type="match status" value="1"/>
</dbReference>
<dbReference type="PRINTS" id="PR01040">
    <property type="entry name" value="TRNASYNTHTYR"/>
</dbReference>
<dbReference type="SUPFAM" id="SSF55174">
    <property type="entry name" value="Alpha-L RNA-binding motif"/>
    <property type="match status" value="1"/>
</dbReference>
<dbReference type="SUPFAM" id="SSF52374">
    <property type="entry name" value="Nucleotidylyl transferase"/>
    <property type="match status" value="1"/>
</dbReference>
<dbReference type="PROSITE" id="PS50889">
    <property type="entry name" value="S4"/>
    <property type="match status" value="1"/>
</dbReference>
<proteinExistence type="inferred from homology"/>
<protein>
    <recommendedName>
        <fullName evidence="1">Tyrosine--tRNA ligase</fullName>
        <ecNumber evidence="1">6.1.1.1</ecNumber>
    </recommendedName>
    <alternativeName>
        <fullName evidence="1">Tyrosyl-tRNA synthetase</fullName>
        <shortName evidence="1">TyrRS</shortName>
    </alternativeName>
</protein>
<gene>
    <name evidence="1" type="primary">tyrS</name>
    <name type="ordered locus">syc1540_d</name>
</gene>
<accession>Q5N1U0</accession>
<evidence type="ECO:0000255" key="1">
    <source>
        <dbReference type="HAMAP-Rule" id="MF_02007"/>
    </source>
</evidence>
<feature type="chain" id="PRO_0000236768" description="Tyrosine--tRNA ligase">
    <location>
        <begin position="1"/>
        <end position="402"/>
    </location>
</feature>
<feature type="domain" description="S4 RNA-binding" evidence="1">
    <location>
        <begin position="338"/>
        <end position="402"/>
    </location>
</feature>
<feature type="short sequence motif" description="'HIGH' region">
    <location>
        <begin position="48"/>
        <end position="57"/>
    </location>
</feature>
<feature type="short sequence motif" description="'KMSKS' region">
    <location>
        <begin position="235"/>
        <end position="239"/>
    </location>
</feature>
<feature type="binding site" evidence="1">
    <location>
        <position position="238"/>
    </location>
    <ligand>
        <name>ATP</name>
        <dbReference type="ChEBI" id="CHEBI:30616"/>
    </ligand>
</feature>
<keyword id="KW-0030">Aminoacyl-tRNA synthetase</keyword>
<keyword id="KW-0067">ATP-binding</keyword>
<keyword id="KW-0963">Cytoplasm</keyword>
<keyword id="KW-0436">Ligase</keyword>
<keyword id="KW-0547">Nucleotide-binding</keyword>
<keyword id="KW-0648">Protein biosynthesis</keyword>
<keyword id="KW-0694">RNA-binding</keyword>
<comment type="function">
    <text evidence="1">Catalyzes the attachment of tyrosine to tRNA(Tyr) in a two-step reaction: tyrosine is first activated by ATP to form Tyr-AMP and then transferred to the acceptor end of tRNA(Tyr).</text>
</comment>
<comment type="catalytic activity">
    <reaction evidence="1">
        <text>tRNA(Tyr) + L-tyrosine + ATP = L-tyrosyl-tRNA(Tyr) + AMP + diphosphate + H(+)</text>
        <dbReference type="Rhea" id="RHEA:10220"/>
        <dbReference type="Rhea" id="RHEA-COMP:9706"/>
        <dbReference type="Rhea" id="RHEA-COMP:9707"/>
        <dbReference type="ChEBI" id="CHEBI:15378"/>
        <dbReference type="ChEBI" id="CHEBI:30616"/>
        <dbReference type="ChEBI" id="CHEBI:33019"/>
        <dbReference type="ChEBI" id="CHEBI:58315"/>
        <dbReference type="ChEBI" id="CHEBI:78442"/>
        <dbReference type="ChEBI" id="CHEBI:78536"/>
        <dbReference type="ChEBI" id="CHEBI:456215"/>
        <dbReference type="EC" id="6.1.1.1"/>
    </reaction>
</comment>
<comment type="subunit">
    <text evidence="1">Homodimer.</text>
</comment>
<comment type="subcellular location">
    <subcellularLocation>
        <location evidence="1">Cytoplasm</location>
    </subcellularLocation>
</comment>
<comment type="similarity">
    <text evidence="1">Belongs to the class-I aminoacyl-tRNA synthetase family. TyrS type 2 subfamily.</text>
</comment>